<organism>
    <name type="scientific">Escherichia coli O157:H7</name>
    <dbReference type="NCBI Taxonomy" id="83334"/>
    <lineage>
        <taxon>Bacteria</taxon>
        <taxon>Pseudomonadati</taxon>
        <taxon>Pseudomonadota</taxon>
        <taxon>Gammaproteobacteria</taxon>
        <taxon>Enterobacterales</taxon>
        <taxon>Enterobacteriaceae</taxon>
        <taxon>Escherichia</taxon>
    </lineage>
</organism>
<keyword id="KW-0007">Acetylation</keyword>
<keyword id="KW-0963">Cytoplasm</keyword>
<keyword id="KW-0251">Elongation factor</keyword>
<keyword id="KW-0342">GTP-binding</keyword>
<keyword id="KW-0547">Nucleotide-binding</keyword>
<keyword id="KW-0648">Protein biosynthesis</keyword>
<keyword id="KW-1185">Reference proteome</keyword>
<evidence type="ECO:0000250" key="1"/>
<evidence type="ECO:0000305" key="2"/>
<proteinExistence type="inferred from homology"/>
<reference key="1">
    <citation type="journal article" date="2001" name="Nature">
        <title>Genome sequence of enterohaemorrhagic Escherichia coli O157:H7.</title>
        <authorList>
            <person name="Perna N.T."/>
            <person name="Plunkett G. III"/>
            <person name="Burland V."/>
            <person name="Mau B."/>
            <person name="Glasner J.D."/>
            <person name="Rose D.J."/>
            <person name="Mayhew G.F."/>
            <person name="Evans P.S."/>
            <person name="Gregor J."/>
            <person name="Kirkpatrick H.A."/>
            <person name="Posfai G."/>
            <person name="Hackett J."/>
            <person name="Klink S."/>
            <person name="Boutin A."/>
            <person name="Shao Y."/>
            <person name="Miller L."/>
            <person name="Grotbeck E.J."/>
            <person name="Davis N.W."/>
            <person name="Lim A."/>
            <person name="Dimalanta E.T."/>
            <person name="Potamousis K."/>
            <person name="Apodaca J."/>
            <person name="Anantharaman T.S."/>
            <person name="Lin J."/>
            <person name="Yen G."/>
            <person name="Schwartz D.C."/>
            <person name="Welch R.A."/>
            <person name="Blattner F.R."/>
        </authorList>
    </citation>
    <scope>NUCLEOTIDE SEQUENCE [LARGE SCALE GENOMIC DNA]</scope>
    <source>
        <strain>O157:H7 / EDL933 / ATCC 700927 / EHEC</strain>
    </source>
</reference>
<reference key="2">
    <citation type="journal article" date="2001" name="DNA Res.">
        <title>Complete genome sequence of enterohemorrhagic Escherichia coli O157:H7 and genomic comparison with a laboratory strain K-12.</title>
        <authorList>
            <person name="Hayashi T."/>
            <person name="Makino K."/>
            <person name="Ohnishi M."/>
            <person name="Kurokawa K."/>
            <person name="Ishii K."/>
            <person name="Yokoyama K."/>
            <person name="Han C.-G."/>
            <person name="Ohtsubo E."/>
            <person name="Nakayama K."/>
            <person name="Murata T."/>
            <person name="Tanaka M."/>
            <person name="Tobe T."/>
            <person name="Iida T."/>
            <person name="Takami H."/>
            <person name="Honda T."/>
            <person name="Sasakawa C."/>
            <person name="Ogasawara N."/>
            <person name="Yasunaga T."/>
            <person name="Kuhara S."/>
            <person name="Shiba T."/>
            <person name="Hattori M."/>
            <person name="Shinagawa H."/>
        </authorList>
    </citation>
    <scope>NUCLEOTIDE SEQUENCE [LARGE SCALE GENOMIC DNA]</scope>
    <source>
        <strain>O157:H7 / Sakai / RIMD 0509952 / EHEC</strain>
    </source>
</reference>
<dbReference type="EMBL" id="AE005174">
    <property type="protein sequence ID" value="AAG58447.1"/>
    <property type="molecule type" value="Genomic_DNA"/>
</dbReference>
<dbReference type="EMBL" id="BA000007">
    <property type="protein sequence ID" value="BAB37614.1"/>
    <property type="molecule type" value="Genomic_DNA"/>
</dbReference>
<dbReference type="PIR" id="C85998">
    <property type="entry name" value="C85998"/>
</dbReference>
<dbReference type="PIR" id="G91152">
    <property type="entry name" value="G91152"/>
</dbReference>
<dbReference type="RefSeq" id="NP_312218.1">
    <property type="nucleotide sequence ID" value="NC_002695.1"/>
</dbReference>
<dbReference type="RefSeq" id="WP_000124700.1">
    <property type="nucleotide sequence ID" value="NZ_VOAI01000004.1"/>
</dbReference>
<dbReference type="SMR" id="P0A6N0"/>
<dbReference type="STRING" id="155864.Z4698"/>
<dbReference type="GeneID" id="915956"/>
<dbReference type="GeneID" id="93778658"/>
<dbReference type="KEGG" id="ece:Z4698"/>
<dbReference type="KEGG" id="ecs:ECs_4191"/>
<dbReference type="PATRIC" id="fig|386585.9.peg.4374"/>
<dbReference type="eggNOG" id="COG0480">
    <property type="taxonomic scope" value="Bacteria"/>
</dbReference>
<dbReference type="HOGENOM" id="CLU_002794_4_1_6"/>
<dbReference type="OMA" id="GQFAKVQ"/>
<dbReference type="Proteomes" id="UP000000558">
    <property type="component" value="Chromosome"/>
</dbReference>
<dbReference type="Proteomes" id="UP000002519">
    <property type="component" value="Chromosome"/>
</dbReference>
<dbReference type="GO" id="GO:0005737">
    <property type="term" value="C:cytoplasm"/>
    <property type="evidence" value="ECO:0007669"/>
    <property type="project" value="UniProtKB-SubCell"/>
</dbReference>
<dbReference type="GO" id="GO:0005525">
    <property type="term" value="F:GTP binding"/>
    <property type="evidence" value="ECO:0007669"/>
    <property type="project" value="UniProtKB-UniRule"/>
</dbReference>
<dbReference type="GO" id="GO:0003924">
    <property type="term" value="F:GTPase activity"/>
    <property type="evidence" value="ECO:0007669"/>
    <property type="project" value="InterPro"/>
</dbReference>
<dbReference type="GO" id="GO:0097216">
    <property type="term" value="F:guanosine tetraphosphate binding"/>
    <property type="evidence" value="ECO:0007669"/>
    <property type="project" value="UniProtKB-ARBA"/>
</dbReference>
<dbReference type="GO" id="GO:0003746">
    <property type="term" value="F:translation elongation factor activity"/>
    <property type="evidence" value="ECO:0007669"/>
    <property type="project" value="UniProtKB-UniRule"/>
</dbReference>
<dbReference type="GO" id="GO:0032790">
    <property type="term" value="P:ribosome disassembly"/>
    <property type="evidence" value="ECO:0007669"/>
    <property type="project" value="TreeGrafter"/>
</dbReference>
<dbReference type="CDD" id="cd01886">
    <property type="entry name" value="EF-G"/>
    <property type="match status" value="1"/>
</dbReference>
<dbReference type="CDD" id="cd16262">
    <property type="entry name" value="EFG_III"/>
    <property type="match status" value="1"/>
</dbReference>
<dbReference type="CDD" id="cd01434">
    <property type="entry name" value="EFG_mtEFG1_IV"/>
    <property type="match status" value="1"/>
</dbReference>
<dbReference type="CDD" id="cd03713">
    <property type="entry name" value="EFG_mtEFG_C"/>
    <property type="match status" value="1"/>
</dbReference>
<dbReference type="CDD" id="cd04088">
    <property type="entry name" value="EFG_mtEFG_II"/>
    <property type="match status" value="1"/>
</dbReference>
<dbReference type="FunFam" id="2.40.30.10:FF:000006">
    <property type="entry name" value="Elongation factor G"/>
    <property type="match status" value="1"/>
</dbReference>
<dbReference type="FunFam" id="3.30.230.10:FF:000003">
    <property type="entry name" value="Elongation factor G"/>
    <property type="match status" value="1"/>
</dbReference>
<dbReference type="FunFam" id="3.30.70.240:FF:000001">
    <property type="entry name" value="Elongation factor G"/>
    <property type="match status" value="1"/>
</dbReference>
<dbReference type="FunFam" id="3.30.70.870:FF:000001">
    <property type="entry name" value="Elongation factor G"/>
    <property type="match status" value="1"/>
</dbReference>
<dbReference type="FunFam" id="3.40.50.300:FF:000029">
    <property type="entry name" value="Elongation factor G"/>
    <property type="match status" value="1"/>
</dbReference>
<dbReference type="Gene3D" id="3.30.230.10">
    <property type="match status" value="1"/>
</dbReference>
<dbReference type="Gene3D" id="3.30.70.240">
    <property type="match status" value="1"/>
</dbReference>
<dbReference type="Gene3D" id="3.30.70.870">
    <property type="entry name" value="Elongation Factor G (Translational Gtpase), domain 3"/>
    <property type="match status" value="1"/>
</dbReference>
<dbReference type="Gene3D" id="3.40.50.300">
    <property type="entry name" value="P-loop containing nucleotide triphosphate hydrolases"/>
    <property type="match status" value="1"/>
</dbReference>
<dbReference type="Gene3D" id="2.40.30.10">
    <property type="entry name" value="Translation factors"/>
    <property type="match status" value="1"/>
</dbReference>
<dbReference type="HAMAP" id="MF_00054_B">
    <property type="entry name" value="EF_G_EF_2_B"/>
    <property type="match status" value="1"/>
</dbReference>
<dbReference type="InterPro" id="IPR041095">
    <property type="entry name" value="EFG_II"/>
</dbReference>
<dbReference type="InterPro" id="IPR009022">
    <property type="entry name" value="EFG_III"/>
</dbReference>
<dbReference type="InterPro" id="IPR035647">
    <property type="entry name" value="EFG_III/V"/>
</dbReference>
<dbReference type="InterPro" id="IPR047872">
    <property type="entry name" value="EFG_IV"/>
</dbReference>
<dbReference type="InterPro" id="IPR035649">
    <property type="entry name" value="EFG_V"/>
</dbReference>
<dbReference type="InterPro" id="IPR000640">
    <property type="entry name" value="EFG_V-like"/>
</dbReference>
<dbReference type="InterPro" id="IPR004161">
    <property type="entry name" value="EFTu-like_2"/>
</dbReference>
<dbReference type="InterPro" id="IPR031157">
    <property type="entry name" value="G_TR_CS"/>
</dbReference>
<dbReference type="InterPro" id="IPR027417">
    <property type="entry name" value="P-loop_NTPase"/>
</dbReference>
<dbReference type="InterPro" id="IPR020568">
    <property type="entry name" value="Ribosomal_Su5_D2-typ_SF"/>
</dbReference>
<dbReference type="InterPro" id="IPR014721">
    <property type="entry name" value="Ribsml_uS5_D2-typ_fold_subgr"/>
</dbReference>
<dbReference type="InterPro" id="IPR005225">
    <property type="entry name" value="Small_GTP-bd"/>
</dbReference>
<dbReference type="InterPro" id="IPR000795">
    <property type="entry name" value="T_Tr_GTP-bd_dom"/>
</dbReference>
<dbReference type="InterPro" id="IPR009000">
    <property type="entry name" value="Transl_B-barrel_sf"/>
</dbReference>
<dbReference type="InterPro" id="IPR004540">
    <property type="entry name" value="Transl_elong_EFG/EF2"/>
</dbReference>
<dbReference type="InterPro" id="IPR005517">
    <property type="entry name" value="Transl_elong_EFG/EF2_IV"/>
</dbReference>
<dbReference type="NCBIfam" id="TIGR00484">
    <property type="entry name" value="EF-G"/>
    <property type="match status" value="1"/>
</dbReference>
<dbReference type="NCBIfam" id="NF009381">
    <property type="entry name" value="PRK12740.1-5"/>
    <property type="match status" value="1"/>
</dbReference>
<dbReference type="NCBIfam" id="TIGR00231">
    <property type="entry name" value="small_GTP"/>
    <property type="match status" value="1"/>
</dbReference>
<dbReference type="PANTHER" id="PTHR43261:SF1">
    <property type="entry name" value="RIBOSOME-RELEASING FACTOR 2, MITOCHONDRIAL"/>
    <property type="match status" value="1"/>
</dbReference>
<dbReference type="PANTHER" id="PTHR43261">
    <property type="entry name" value="TRANSLATION ELONGATION FACTOR G-RELATED"/>
    <property type="match status" value="1"/>
</dbReference>
<dbReference type="Pfam" id="PF00679">
    <property type="entry name" value="EFG_C"/>
    <property type="match status" value="1"/>
</dbReference>
<dbReference type="Pfam" id="PF14492">
    <property type="entry name" value="EFG_III"/>
    <property type="match status" value="1"/>
</dbReference>
<dbReference type="Pfam" id="PF03764">
    <property type="entry name" value="EFG_IV"/>
    <property type="match status" value="1"/>
</dbReference>
<dbReference type="Pfam" id="PF00009">
    <property type="entry name" value="GTP_EFTU"/>
    <property type="match status" value="1"/>
</dbReference>
<dbReference type="Pfam" id="PF03144">
    <property type="entry name" value="GTP_EFTU_D2"/>
    <property type="match status" value="1"/>
</dbReference>
<dbReference type="PRINTS" id="PR00315">
    <property type="entry name" value="ELONGATNFCT"/>
</dbReference>
<dbReference type="SMART" id="SM00838">
    <property type="entry name" value="EFG_C"/>
    <property type="match status" value="1"/>
</dbReference>
<dbReference type="SMART" id="SM00889">
    <property type="entry name" value="EFG_IV"/>
    <property type="match status" value="1"/>
</dbReference>
<dbReference type="SUPFAM" id="SSF54980">
    <property type="entry name" value="EF-G C-terminal domain-like"/>
    <property type="match status" value="2"/>
</dbReference>
<dbReference type="SUPFAM" id="SSF52540">
    <property type="entry name" value="P-loop containing nucleoside triphosphate hydrolases"/>
    <property type="match status" value="1"/>
</dbReference>
<dbReference type="SUPFAM" id="SSF54211">
    <property type="entry name" value="Ribosomal protein S5 domain 2-like"/>
    <property type="match status" value="1"/>
</dbReference>
<dbReference type="SUPFAM" id="SSF50447">
    <property type="entry name" value="Translation proteins"/>
    <property type="match status" value="1"/>
</dbReference>
<dbReference type="PROSITE" id="PS00301">
    <property type="entry name" value="G_TR_1"/>
    <property type="match status" value="1"/>
</dbReference>
<dbReference type="PROSITE" id="PS51722">
    <property type="entry name" value="G_TR_2"/>
    <property type="match status" value="1"/>
</dbReference>
<name>EFG_ECO57</name>
<sequence length="704" mass="77581">MARTTPIARYRNIGISAHIDAGKTTTTERILFYTGVNHKIGEVHDGAATMDWMEQEQERGITITSAATTAFWSGMAKQYEPHRINIIDTPGHVDFTIEVERSMRVLDGAVMVYCAVGGVQPQSETVWRQANKYKVPRIAFVNKMDRMGANFLKVVNQIKTRLGANPVPLQLAIGAEEHFTGVVDLVKMKAINWNDADQGVTFEYEDIPADMVELANEWHQNLIESAAEASEELMEKYLGGEELTEAEIKGALRQRVLNNEIILVTCGSAFKNKGVQAMLDAVIDYLPSPVDVPAINGILDDGKDTPAERHASDDEPFSALAFKIATDPFVGNLTFFRVYSGVVNSGDTVLNSVKAARERFGRIVQMHANKREEIKEVRAGDIAAAIGLKDVTTGDTLCDPDAPIILERMEFPEPVISIAVEPKTKADQEKMGLALGRLAKEDPSFRVWTDEESNQTIIAGMGELHLDIIVDRMKREFNVEANVGKPQVAYRETIRQKVTDVEGKHAKQSGGRGQYGHVVIDMYPLEPGSNPKGYEFINDIKGGVIPGEYIPAVDKGIQEQLKAGPLAGYPVVDMGIRLHFGSYHDVDSSELAFKLAASIAFKEGFKKAKPVLLEPIMKVEVETPEENTGDVIGDLSRRRGMLKGQESEVTGVKIHAEVPLSEMFGYATQLRSLTKGRASYTMEFLKYDEAPSNVAQAVIEARGK</sequence>
<accession>P0A6N0</accession>
<accession>P02996</accession>
<accession>Q9F439</accession>
<feature type="initiator methionine" description="Removed" evidence="1">
    <location>
        <position position="1"/>
    </location>
</feature>
<feature type="chain" id="PRO_0000091121" description="Elongation factor G">
    <location>
        <begin position="2"/>
        <end position="704"/>
    </location>
</feature>
<feature type="domain" description="tr-type G">
    <location>
        <begin position="8"/>
        <end position="290"/>
    </location>
</feature>
<feature type="binding site" evidence="1">
    <location>
        <begin position="17"/>
        <end position="24"/>
    </location>
    <ligand>
        <name>GTP</name>
        <dbReference type="ChEBI" id="CHEBI:37565"/>
    </ligand>
</feature>
<feature type="binding site" evidence="1">
    <location>
        <begin position="88"/>
        <end position="92"/>
    </location>
    <ligand>
        <name>GTP</name>
        <dbReference type="ChEBI" id="CHEBI:37565"/>
    </ligand>
</feature>
<feature type="binding site" evidence="1">
    <location>
        <begin position="142"/>
        <end position="145"/>
    </location>
    <ligand>
        <name>GTP</name>
        <dbReference type="ChEBI" id="CHEBI:37565"/>
    </ligand>
</feature>
<feature type="modified residue" description="N6-acetyllysine" evidence="1">
    <location>
        <position position="504"/>
    </location>
</feature>
<feature type="modified residue" description="N6-acetyllysine" evidence="1">
    <location>
        <position position="643"/>
    </location>
</feature>
<protein>
    <recommendedName>
        <fullName>Elongation factor G</fullName>
        <shortName>EF-G</shortName>
    </recommendedName>
</protein>
<comment type="function">
    <text evidence="1">Catalyzes the GTP-dependent ribosomal translocation step during translation elongation. During this step, the ribosome changes from the pre-translocational (PRE) to the post-translocational (POST) state as the newly formed A-site-bound peptidyl-tRNA and P-site-bound deacylated tRNA move to the P and E sites, respectively. Catalyzes the coordinated movement of the two tRNA molecules, the mRNA and conformational changes in the ribosome (By similarity).</text>
</comment>
<comment type="subcellular location">
    <subcellularLocation>
        <location evidence="1">Cytoplasm</location>
    </subcellularLocation>
</comment>
<comment type="similarity">
    <text evidence="2">Belongs to the TRAFAC class translation factor GTPase superfamily. Classic translation factor GTPase family. EF-G/EF-2 subfamily.</text>
</comment>
<gene>
    <name type="primary">fusA</name>
    <name type="synonym">far</name>
    <name type="synonym">fus</name>
    <name type="ordered locus">Z4698</name>
    <name type="ordered locus">ECs4191</name>
</gene>